<keyword id="KW-0963">Cytoplasm</keyword>
<keyword id="KW-0275">Fatty acid biosynthesis</keyword>
<keyword id="KW-0276">Fatty acid metabolism</keyword>
<keyword id="KW-0444">Lipid biosynthesis</keyword>
<keyword id="KW-0443">Lipid metabolism</keyword>
<keyword id="KW-0596">Phosphopantetheine</keyword>
<keyword id="KW-0597">Phosphoprotein</keyword>
<keyword id="KW-1185">Reference proteome</keyword>
<name>ACP_CHLT3</name>
<proteinExistence type="inferred from homology"/>
<gene>
    <name evidence="1" type="primary">acpP</name>
    <name type="ordered locus">Ctha_1560</name>
</gene>
<protein>
    <recommendedName>
        <fullName evidence="1">Acyl carrier protein</fullName>
        <shortName evidence="1">ACP</shortName>
    </recommendedName>
</protein>
<reference key="1">
    <citation type="submission" date="2008-06" db="EMBL/GenBank/DDBJ databases">
        <title>Complete sequence of Chloroherpeton thalassium ATCC 35110.</title>
        <authorList>
            <consortium name="US DOE Joint Genome Institute"/>
            <person name="Lucas S."/>
            <person name="Copeland A."/>
            <person name="Lapidus A."/>
            <person name="Glavina del Rio T."/>
            <person name="Dalin E."/>
            <person name="Tice H."/>
            <person name="Bruce D."/>
            <person name="Goodwin L."/>
            <person name="Pitluck S."/>
            <person name="Schmutz J."/>
            <person name="Larimer F."/>
            <person name="Land M."/>
            <person name="Hauser L."/>
            <person name="Kyrpides N."/>
            <person name="Mikhailova N."/>
            <person name="Liu Z."/>
            <person name="Li T."/>
            <person name="Zhao F."/>
            <person name="Overmann J."/>
            <person name="Bryant D.A."/>
            <person name="Richardson P."/>
        </authorList>
    </citation>
    <scope>NUCLEOTIDE SEQUENCE [LARGE SCALE GENOMIC DNA]</scope>
    <source>
        <strain>ATCC 35110 / GB-78</strain>
    </source>
</reference>
<accession>B3QS74</accession>
<feature type="chain" id="PRO_1000139012" description="Acyl carrier protein">
    <location>
        <begin position="1"/>
        <end position="80"/>
    </location>
</feature>
<feature type="domain" description="Carrier" evidence="2">
    <location>
        <begin position="4"/>
        <end position="79"/>
    </location>
</feature>
<feature type="modified residue" description="O-(pantetheine 4'-phosphoryl)serine" evidence="2">
    <location>
        <position position="39"/>
    </location>
</feature>
<organism>
    <name type="scientific">Chloroherpeton thalassium (strain ATCC 35110 / GB-78)</name>
    <dbReference type="NCBI Taxonomy" id="517418"/>
    <lineage>
        <taxon>Bacteria</taxon>
        <taxon>Pseudomonadati</taxon>
        <taxon>Chlorobiota</taxon>
        <taxon>Chlorobiia</taxon>
        <taxon>Chlorobiales</taxon>
        <taxon>Chloroherpetonaceae</taxon>
        <taxon>Chloroherpeton</taxon>
    </lineage>
</organism>
<dbReference type="EMBL" id="CP001100">
    <property type="protein sequence ID" value="ACF14019.1"/>
    <property type="molecule type" value="Genomic_DNA"/>
</dbReference>
<dbReference type="RefSeq" id="WP_012500103.1">
    <property type="nucleotide sequence ID" value="NC_011026.1"/>
</dbReference>
<dbReference type="SMR" id="B3QS74"/>
<dbReference type="STRING" id="517418.Ctha_1560"/>
<dbReference type="KEGG" id="cts:Ctha_1560"/>
<dbReference type="eggNOG" id="COG0236">
    <property type="taxonomic scope" value="Bacteria"/>
</dbReference>
<dbReference type="HOGENOM" id="CLU_108696_5_1_10"/>
<dbReference type="OrthoDB" id="9804551at2"/>
<dbReference type="UniPathway" id="UPA00094"/>
<dbReference type="Proteomes" id="UP000001208">
    <property type="component" value="Chromosome"/>
</dbReference>
<dbReference type="GO" id="GO:0005829">
    <property type="term" value="C:cytosol"/>
    <property type="evidence" value="ECO:0007669"/>
    <property type="project" value="TreeGrafter"/>
</dbReference>
<dbReference type="GO" id="GO:0016020">
    <property type="term" value="C:membrane"/>
    <property type="evidence" value="ECO:0007669"/>
    <property type="project" value="GOC"/>
</dbReference>
<dbReference type="GO" id="GO:0000035">
    <property type="term" value="F:acyl binding"/>
    <property type="evidence" value="ECO:0007669"/>
    <property type="project" value="TreeGrafter"/>
</dbReference>
<dbReference type="GO" id="GO:0000036">
    <property type="term" value="F:acyl carrier activity"/>
    <property type="evidence" value="ECO:0007669"/>
    <property type="project" value="UniProtKB-UniRule"/>
</dbReference>
<dbReference type="GO" id="GO:0009245">
    <property type="term" value="P:lipid A biosynthetic process"/>
    <property type="evidence" value="ECO:0007669"/>
    <property type="project" value="TreeGrafter"/>
</dbReference>
<dbReference type="FunFam" id="1.10.1200.10:FF:000003">
    <property type="entry name" value="Acyl carrier protein"/>
    <property type="match status" value="1"/>
</dbReference>
<dbReference type="Gene3D" id="1.10.1200.10">
    <property type="entry name" value="ACP-like"/>
    <property type="match status" value="1"/>
</dbReference>
<dbReference type="HAMAP" id="MF_01217">
    <property type="entry name" value="Acyl_carrier"/>
    <property type="match status" value="1"/>
</dbReference>
<dbReference type="InterPro" id="IPR003231">
    <property type="entry name" value="ACP"/>
</dbReference>
<dbReference type="InterPro" id="IPR036736">
    <property type="entry name" value="ACP-like_sf"/>
</dbReference>
<dbReference type="InterPro" id="IPR009081">
    <property type="entry name" value="PP-bd_ACP"/>
</dbReference>
<dbReference type="InterPro" id="IPR006162">
    <property type="entry name" value="Ppantetheine_attach_site"/>
</dbReference>
<dbReference type="NCBIfam" id="TIGR00517">
    <property type="entry name" value="acyl_carrier"/>
    <property type="match status" value="1"/>
</dbReference>
<dbReference type="NCBIfam" id="NF002148">
    <property type="entry name" value="PRK00982.1-2"/>
    <property type="match status" value="1"/>
</dbReference>
<dbReference type="NCBIfam" id="NF002150">
    <property type="entry name" value="PRK00982.1-4"/>
    <property type="match status" value="1"/>
</dbReference>
<dbReference type="NCBIfam" id="NF002151">
    <property type="entry name" value="PRK00982.1-5"/>
    <property type="match status" value="1"/>
</dbReference>
<dbReference type="PANTHER" id="PTHR20863">
    <property type="entry name" value="ACYL CARRIER PROTEIN"/>
    <property type="match status" value="1"/>
</dbReference>
<dbReference type="PANTHER" id="PTHR20863:SF76">
    <property type="entry name" value="CARRIER DOMAIN-CONTAINING PROTEIN"/>
    <property type="match status" value="1"/>
</dbReference>
<dbReference type="Pfam" id="PF00550">
    <property type="entry name" value="PP-binding"/>
    <property type="match status" value="1"/>
</dbReference>
<dbReference type="SUPFAM" id="SSF47336">
    <property type="entry name" value="ACP-like"/>
    <property type="match status" value="1"/>
</dbReference>
<dbReference type="PROSITE" id="PS50075">
    <property type="entry name" value="CARRIER"/>
    <property type="match status" value="1"/>
</dbReference>
<dbReference type="PROSITE" id="PS00012">
    <property type="entry name" value="PHOSPHOPANTETHEINE"/>
    <property type="match status" value="1"/>
</dbReference>
<evidence type="ECO:0000255" key="1">
    <source>
        <dbReference type="HAMAP-Rule" id="MF_01217"/>
    </source>
</evidence>
<evidence type="ECO:0000255" key="2">
    <source>
        <dbReference type="PROSITE-ProRule" id="PRU00258"/>
    </source>
</evidence>
<sequence length="80" mass="9027">MTVDEVKGQVYDIIVTKMGVGKEQIKDDSKFTDDLGADSLDTVELIMEFENKFGIQIPDEDAEKISNVQDAINYIVEKKK</sequence>
<comment type="function">
    <text evidence="1">Carrier of the growing fatty acid chain in fatty acid biosynthesis.</text>
</comment>
<comment type="pathway">
    <text evidence="1">Lipid metabolism; fatty acid biosynthesis.</text>
</comment>
<comment type="subcellular location">
    <subcellularLocation>
        <location evidence="1">Cytoplasm</location>
    </subcellularLocation>
</comment>
<comment type="PTM">
    <text evidence="1">4'-phosphopantetheine is transferred from CoA to a specific serine of apo-ACP by AcpS. This modification is essential for activity because fatty acids are bound in thioester linkage to the sulfhydryl of the prosthetic group.</text>
</comment>
<comment type="similarity">
    <text evidence="1">Belongs to the acyl carrier protein (ACP) family.</text>
</comment>